<feature type="chain" id="PRO_0000349202" description="Rap guanine nucleotide exchange factor-like 1">
    <location>
        <begin position="1"/>
        <end position="662"/>
    </location>
</feature>
<feature type="domain" description="Ras-GEF" evidence="1">
    <location>
        <begin position="424"/>
        <end position="660"/>
    </location>
</feature>
<feature type="region of interest" description="Disordered" evidence="2">
    <location>
        <begin position="1"/>
        <end position="149"/>
    </location>
</feature>
<feature type="compositionally biased region" description="Gly residues" evidence="2">
    <location>
        <begin position="20"/>
        <end position="48"/>
    </location>
</feature>
<feature type="compositionally biased region" description="Low complexity" evidence="2">
    <location>
        <begin position="49"/>
        <end position="64"/>
    </location>
</feature>
<feature type="compositionally biased region" description="Pro residues" evidence="2">
    <location>
        <begin position="73"/>
        <end position="82"/>
    </location>
</feature>
<feature type="compositionally biased region" description="Low complexity" evidence="2">
    <location>
        <begin position="120"/>
        <end position="135"/>
    </location>
</feature>
<feature type="splice variant" id="VSP_035217" description="In isoform 2." evidence="4 5">
    <location>
        <begin position="1"/>
        <end position="206"/>
    </location>
</feature>
<feature type="splice variant" id="VSP_035385" description="In isoform 3." evidence="3">
    <location>
        <begin position="1"/>
        <end position="151"/>
    </location>
</feature>
<feature type="splice variant" id="VSP_035386" description="In isoform 3." evidence="3">
    <original>EHLLNRVLERLAGGATRDSAASD</original>
    <variation>MLIHPRGLPSSSHRRKINSTYFY</variation>
    <location>
        <begin position="152"/>
        <end position="174"/>
    </location>
</feature>
<feature type="sequence conflict" description="In Ref. 4; BC029956." evidence="6" ref="4">
    <original>VP</original>
    <variation>PE</variation>
    <location>
        <begin position="81"/>
        <end position="82"/>
    </location>
</feature>
<feature type="strand" evidence="7">
    <location>
        <begin position="316"/>
        <end position="318"/>
    </location>
</feature>
<feature type="strand" evidence="7">
    <location>
        <begin position="330"/>
        <end position="332"/>
    </location>
</feature>
<feature type="helix" evidence="7">
    <location>
        <begin position="338"/>
        <end position="348"/>
    </location>
</feature>
<feature type="strand" evidence="7">
    <location>
        <begin position="349"/>
        <end position="351"/>
    </location>
</feature>
<feature type="strand" evidence="7">
    <location>
        <begin position="363"/>
        <end position="368"/>
    </location>
</feature>
<feature type="helix" evidence="7">
    <location>
        <begin position="383"/>
        <end position="386"/>
    </location>
</feature>
<feature type="strand" evidence="7">
    <location>
        <begin position="389"/>
        <end position="396"/>
    </location>
</feature>
<feature type="turn" evidence="7">
    <location>
        <begin position="398"/>
        <end position="403"/>
    </location>
</feature>
<feature type="strand" evidence="7">
    <location>
        <begin position="410"/>
        <end position="413"/>
    </location>
</feature>
<accession>Q9UHV5</accession>
<comment type="function">
    <text>Probable guanine nucleotide exchange factor (GEF).</text>
</comment>
<comment type="alternative products">
    <event type="alternative splicing"/>
    <isoform>
        <id>Q9UHV5-1</id>
        <name>1</name>
        <sequence type="displayed"/>
    </isoform>
    <isoform>
        <id>Q9UHV5-2</id>
        <name>2</name>
        <sequence type="described" ref="VSP_035217"/>
    </isoform>
    <isoform>
        <id>Q9UHV5-3</id>
        <name>3</name>
        <sequence type="described" ref="VSP_035385 VSP_035386"/>
    </isoform>
</comment>
<comment type="sequence caution" evidence="6">
    <conflict type="erroneous initiation">
        <sequence resource="EMBL-CDS" id="BAG36274"/>
    </conflict>
</comment>
<organism>
    <name type="scientific">Homo sapiens</name>
    <name type="common">Human</name>
    <dbReference type="NCBI Taxonomy" id="9606"/>
    <lineage>
        <taxon>Eukaryota</taxon>
        <taxon>Metazoa</taxon>
        <taxon>Chordata</taxon>
        <taxon>Craniata</taxon>
        <taxon>Vertebrata</taxon>
        <taxon>Euteleostomi</taxon>
        <taxon>Mammalia</taxon>
        <taxon>Eutheria</taxon>
        <taxon>Euarchontoglires</taxon>
        <taxon>Primates</taxon>
        <taxon>Haplorrhini</taxon>
        <taxon>Catarrhini</taxon>
        <taxon>Hominidae</taxon>
        <taxon>Homo</taxon>
    </lineage>
</organism>
<gene>
    <name type="primary">RAPGEFL1</name>
</gene>
<name>RPGFL_HUMAN</name>
<protein>
    <recommendedName>
        <fullName>Rap guanine nucleotide exchange factor-like 1</fullName>
    </recommendedName>
    <alternativeName>
        <fullName>Link guanine nucleotide exchange factor II</fullName>
        <shortName>Link GEFII</shortName>
    </alternativeName>
</protein>
<dbReference type="EMBL" id="AF117946">
    <property type="protein sequence ID" value="AAF22003.1"/>
    <property type="molecule type" value="mRNA"/>
</dbReference>
<dbReference type="EMBL" id="AK313492">
    <property type="protein sequence ID" value="BAG36274.1"/>
    <property type="status" value="ALT_INIT"/>
    <property type="molecule type" value="mRNA"/>
</dbReference>
<dbReference type="EMBL" id="AC068669">
    <property type="status" value="NOT_ANNOTATED_CDS"/>
    <property type="molecule type" value="Genomic_DNA"/>
</dbReference>
<dbReference type="EMBL" id="BC029956">
    <property type="status" value="NOT_ANNOTATED_CDS"/>
    <property type="molecule type" value="mRNA"/>
</dbReference>
<dbReference type="EMBL" id="BC115374">
    <property type="protein sequence ID" value="AAI15375.1"/>
    <property type="molecule type" value="mRNA"/>
</dbReference>
<dbReference type="EMBL" id="BC115375">
    <property type="protein sequence ID" value="AAI15376.1"/>
    <property type="molecule type" value="mRNA"/>
</dbReference>
<dbReference type="CCDS" id="CCDS11363.2">
    <molecule id="Q9UHV5-1"/>
</dbReference>
<dbReference type="CCDS" id="CCDS77022.1">
    <molecule id="Q9UHV5-3"/>
</dbReference>
<dbReference type="RefSeq" id="NP_001290462.1">
    <molecule id="Q9UHV5-3"/>
    <property type="nucleotide sequence ID" value="NM_001303533.2"/>
</dbReference>
<dbReference type="RefSeq" id="NP_057423.1">
    <property type="nucleotide sequence ID" value="NM_016339.4"/>
</dbReference>
<dbReference type="RefSeq" id="XP_006722000.1">
    <property type="nucleotide sequence ID" value="XM_006721937.3"/>
</dbReference>
<dbReference type="RefSeq" id="XP_047292161.1">
    <molecule id="Q9UHV5-2"/>
    <property type="nucleotide sequence ID" value="XM_047436205.1"/>
</dbReference>
<dbReference type="RefSeq" id="XP_054172333.1">
    <molecule id="Q9UHV5-2"/>
    <property type="nucleotide sequence ID" value="XM_054316358.1"/>
</dbReference>
<dbReference type="PDB" id="2DHZ">
    <property type="method" value="NMR"/>
    <property type="chains" value="A=314-420"/>
</dbReference>
<dbReference type="PDBsum" id="2DHZ"/>
<dbReference type="BMRB" id="Q9UHV5"/>
<dbReference type="SMR" id="Q9UHV5"/>
<dbReference type="BioGRID" id="119369">
    <property type="interactions" value="6"/>
</dbReference>
<dbReference type="FunCoup" id="Q9UHV5">
    <property type="interactions" value="768"/>
</dbReference>
<dbReference type="IntAct" id="Q9UHV5">
    <property type="interactions" value="3"/>
</dbReference>
<dbReference type="STRING" id="9606.ENSP00000479735"/>
<dbReference type="GlyCosmos" id="Q9UHV5">
    <property type="glycosylation" value="2 sites, 1 glycan"/>
</dbReference>
<dbReference type="GlyGen" id="Q9UHV5">
    <property type="glycosylation" value="3 sites, 1 O-linked glycan (3 sites)"/>
</dbReference>
<dbReference type="iPTMnet" id="Q9UHV5"/>
<dbReference type="PhosphoSitePlus" id="Q9UHV5"/>
<dbReference type="BioMuta" id="RAPGEFL1"/>
<dbReference type="DMDM" id="205829945"/>
<dbReference type="jPOST" id="Q9UHV5"/>
<dbReference type="MassIVE" id="Q9UHV5"/>
<dbReference type="PaxDb" id="9606-ENSP00000264644"/>
<dbReference type="PeptideAtlas" id="Q9UHV5"/>
<dbReference type="ProteomicsDB" id="84414">
    <molecule id="Q9UHV5-1"/>
</dbReference>
<dbReference type="ProteomicsDB" id="84415">
    <molecule id="Q9UHV5-2"/>
</dbReference>
<dbReference type="ProteomicsDB" id="84416">
    <molecule id="Q9UHV5-3"/>
</dbReference>
<dbReference type="Antibodypedia" id="16447">
    <property type="antibodies" value="76 antibodies from 20 providers"/>
</dbReference>
<dbReference type="DNASU" id="51195"/>
<dbReference type="Ensembl" id="ENST00000264644.10">
    <molecule id="Q9UHV5-2"/>
    <property type="protein sequence ID" value="ENSP00000264644.5"/>
    <property type="gene ID" value="ENSG00000108352.13"/>
</dbReference>
<dbReference type="Ensembl" id="ENST00000456989.6">
    <molecule id="Q9UHV5-3"/>
    <property type="protein sequence ID" value="ENSP00000394530.2"/>
    <property type="gene ID" value="ENSG00000108352.13"/>
</dbReference>
<dbReference type="GeneID" id="51195"/>
<dbReference type="KEGG" id="hsa:51195"/>
<dbReference type="UCSC" id="uc060exk.1">
    <molecule id="Q9UHV5-1"/>
    <property type="organism name" value="human"/>
</dbReference>
<dbReference type="AGR" id="HGNC:17428"/>
<dbReference type="CTD" id="51195"/>
<dbReference type="DisGeNET" id="51195"/>
<dbReference type="GeneCards" id="RAPGEFL1"/>
<dbReference type="HGNC" id="HGNC:17428">
    <property type="gene designation" value="RAPGEFL1"/>
</dbReference>
<dbReference type="HPA" id="ENSG00000108352">
    <property type="expression patterns" value="Tissue enhanced (esophagus, skin, vagina)"/>
</dbReference>
<dbReference type="neXtProt" id="NX_Q9UHV5"/>
<dbReference type="OpenTargets" id="ENSG00000108352"/>
<dbReference type="PharmGKB" id="PA134884826"/>
<dbReference type="VEuPathDB" id="HostDB:ENSG00000108352"/>
<dbReference type="eggNOG" id="KOG2378">
    <property type="taxonomic scope" value="Eukaryota"/>
</dbReference>
<dbReference type="GeneTree" id="ENSGT00940000160144"/>
<dbReference type="HOGENOM" id="CLU_028002_1_0_1"/>
<dbReference type="InParanoid" id="Q9UHV5"/>
<dbReference type="OrthoDB" id="21144at2759"/>
<dbReference type="PAN-GO" id="Q9UHV5">
    <property type="GO annotations" value="4 GO annotations based on evolutionary models"/>
</dbReference>
<dbReference type="PhylomeDB" id="Q9UHV5"/>
<dbReference type="TreeFam" id="TF313184"/>
<dbReference type="PathwayCommons" id="Q9UHV5"/>
<dbReference type="SignaLink" id="Q9UHV5"/>
<dbReference type="BioGRID-ORCS" id="51195">
    <property type="hits" value="17 hits in 1148 CRISPR screens"/>
</dbReference>
<dbReference type="ChiTaRS" id="RAPGEFL1">
    <property type="organism name" value="human"/>
</dbReference>
<dbReference type="EvolutionaryTrace" id="Q9UHV5"/>
<dbReference type="GenomeRNAi" id="51195"/>
<dbReference type="Pharos" id="Q9UHV5">
    <property type="development level" value="Tdark"/>
</dbReference>
<dbReference type="PRO" id="PR:Q9UHV5"/>
<dbReference type="Proteomes" id="UP000005640">
    <property type="component" value="Chromosome 17"/>
</dbReference>
<dbReference type="RNAct" id="Q9UHV5">
    <property type="molecule type" value="protein"/>
</dbReference>
<dbReference type="Bgee" id="ENSG00000108352">
    <property type="expression patterns" value="Expressed in lower esophagus mucosa and 144 other cell types or tissues"/>
</dbReference>
<dbReference type="ExpressionAtlas" id="Q9UHV5">
    <property type="expression patterns" value="baseline and differential"/>
</dbReference>
<dbReference type="GO" id="GO:0016020">
    <property type="term" value="C:membrane"/>
    <property type="evidence" value="ECO:0000304"/>
    <property type="project" value="ProtInc"/>
</dbReference>
<dbReference type="GO" id="GO:0005886">
    <property type="term" value="C:plasma membrane"/>
    <property type="evidence" value="ECO:0000318"/>
    <property type="project" value="GO_Central"/>
</dbReference>
<dbReference type="GO" id="GO:0005085">
    <property type="term" value="F:guanyl-nucleotide exchange factor activity"/>
    <property type="evidence" value="ECO:0000318"/>
    <property type="project" value="GO_Central"/>
</dbReference>
<dbReference type="GO" id="GO:0007186">
    <property type="term" value="P:G protein-coupled receptor signaling pathway"/>
    <property type="evidence" value="ECO:0000304"/>
    <property type="project" value="ProtInc"/>
</dbReference>
<dbReference type="GO" id="GO:0007399">
    <property type="term" value="P:nervous system development"/>
    <property type="evidence" value="ECO:0000304"/>
    <property type="project" value="ProtInc"/>
</dbReference>
<dbReference type="GO" id="GO:0007265">
    <property type="term" value="P:Ras protein signal transduction"/>
    <property type="evidence" value="ECO:0000318"/>
    <property type="project" value="GO_Central"/>
</dbReference>
<dbReference type="CDD" id="cd00155">
    <property type="entry name" value="RasGEF"/>
    <property type="match status" value="1"/>
</dbReference>
<dbReference type="FunFam" id="1.10.840.10:FF:000002">
    <property type="entry name" value="Rap guanine nucleotide exchange factor 4"/>
    <property type="match status" value="1"/>
</dbReference>
<dbReference type="FunFam" id="3.10.20.90:FF:000038">
    <property type="entry name" value="Rap guanine nucleotide exchange factor 4"/>
    <property type="match status" value="1"/>
</dbReference>
<dbReference type="FunFam" id="1.20.870.10:FF:000012">
    <property type="entry name" value="Rap guanine nucleotide exchange factor like 1"/>
    <property type="match status" value="1"/>
</dbReference>
<dbReference type="Gene3D" id="3.10.20.90">
    <property type="entry name" value="Phosphatidylinositol 3-kinase Catalytic Subunit, Chain A, domain 1"/>
    <property type="match status" value="1"/>
</dbReference>
<dbReference type="Gene3D" id="1.10.840.10">
    <property type="entry name" value="Ras guanine-nucleotide exchange factors catalytic domain"/>
    <property type="match status" value="1"/>
</dbReference>
<dbReference type="Gene3D" id="1.20.870.10">
    <property type="entry name" value="Son of sevenless (SoS) protein Chain: S domain 1"/>
    <property type="match status" value="1"/>
</dbReference>
<dbReference type="InterPro" id="IPR008937">
    <property type="entry name" value="Ras-like_GEF"/>
</dbReference>
<dbReference type="InterPro" id="IPR023578">
    <property type="entry name" value="Ras_GEF_dom_sf"/>
</dbReference>
<dbReference type="InterPro" id="IPR001895">
    <property type="entry name" value="RASGEF_cat_dom"/>
</dbReference>
<dbReference type="InterPro" id="IPR036964">
    <property type="entry name" value="RASGEF_cat_dom_sf"/>
</dbReference>
<dbReference type="InterPro" id="IPR029071">
    <property type="entry name" value="Ubiquitin-like_domsf"/>
</dbReference>
<dbReference type="PANTHER" id="PTHR23113">
    <property type="entry name" value="GUANINE NUCLEOTIDE EXCHANGE FACTOR"/>
    <property type="match status" value="1"/>
</dbReference>
<dbReference type="PANTHER" id="PTHR23113:SF230">
    <property type="entry name" value="RAP GUANINE NUCLEOTIDE EXCHANGE FACTOR-LIKE 1"/>
    <property type="match status" value="1"/>
</dbReference>
<dbReference type="Pfam" id="PF00617">
    <property type="entry name" value="RasGEF"/>
    <property type="match status" value="1"/>
</dbReference>
<dbReference type="SMART" id="SM00147">
    <property type="entry name" value="RasGEF"/>
    <property type="match status" value="1"/>
</dbReference>
<dbReference type="SUPFAM" id="SSF48366">
    <property type="entry name" value="Ras GEF"/>
    <property type="match status" value="1"/>
</dbReference>
<dbReference type="SUPFAM" id="SSF54236">
    <property type="entry name" value="Ubiquitin-like"/>
    <property type="match status" value="1"/>
</dbReference>
<dbReference type="PROSITE" id="PS50009">
    <property type="entry name" value="RASGEF_CAT"/>
    <property type="match status" value="1"/>
</dbReference>
<sequence>MKPLEKFLKKQTSQLAGRTVAGGPGGGLGSCGGPGGGGGPGGGGGPAGGQRSLQRRQSVSRLLLPAFLREPPAEPGLEPPVPEEGGEPAGVAEEPGSGGPCWLQLEEVPGPGPLGGGGPLRSPSSYSSDELSPGEPLTSPPWAPLGAPERPEHLLNRVLERLAGGATRDSAASDILLDDIVLTHSLFLPTEKFLQELHQYFVRAGGMEGPEGLGRKQACLAMLLHFLDTYQGLLQEEEGAGHIIKDLYLLIMKDESLYQGLREDTLRLHQLVETVELKIPEENQPPSKQVKPLFRHFRRIDSCLQTRVAFRGSDEIFCRVYMPDHSYVTIRSRLSASVQDILGSVTEKLQYSEEPAGREDSLILVAVSSSGEKVLLQPTEDCVFTALGINSHLFACTRDSYEALVPLPEEIQVSPGDTEIHRVEPEDVANHLTAFHWELFRCVHELEFVDYVFHGERGRRETANLELLLQRCSEVTHWVATEVLLCEAPGKRAQLLKKFIKIAALCKQNQDLLSFYAVVMGLDNAAVSRLRLTWEKLPGKFKNLFRKFENLTDPCRNHKSYREVISKMKPPVIPFVPLILKDLTFLHEGSKTLVDGLVNIEKLHSVAEKVRTIRKYRSRPLCLDMEASPNHLQTKAYVRQFQVIDNQNLLFELSYKLEANSQ</sequence>
<keyword id="KW-0002">3D-structure</keyword>
<keyword id="KW-0025">Alternative splicing</keyword>
<keyword id="KW-0344">Guanine-nucleotide releasing factor</keyword>
<keyword id="KW-1267">Proteomics identification</keyword>
<keyword id="KW-1185">Reference proteome</keyword>
<proteinExistence type="evidence at protein level"/>
<evidence type="ECO:0000255" key="1">
    <source>
        <dbReference type="PROSITE-ProRule" id="PRU00168"/>
    </source>
</evidence>
<evidence type="ECO:0000256" key="2">
    <source>
        <dbReference type="SAM" id="MobiDB-lite"/>
    </source>
</evidence>
<evidence type="ECO:0000303" key="3">
    <source>
    </source>
</evidence>
<evidence type="ECO:0000303" key="4">
    <source>
    </source>
</evidence>
<evidence type="ECO:0000303" key="5">
    <source ref="1"/>
</evidence>
<evidence type="ECO:0000305" key="6"/>
<evidence type="ECO:0007829" key="7">
    <source>
        <dbReference type="PDB" id="2DHZ"/>
    </source>
</evidence>
<reference key="1">
    <citation type="submission" date="1999-01" db="EMBL/GenBank/DDBJ databases">
        <title>A new family of Rap guanine nucleotide exchange factors.</title>
        <authorList>
            <person name="Kawasaki H."/>
            <person name="Chen E.J."/>
            <person name="Springett G.M."/>
            <person name="Graybiel A.M."/>
            <person name="Housman D.E."/>
        </authorList>
    </citation>
    <scope>NUCLEOTIDE SEQUENCE [MRNA] (ISOFORM 2)</scope>
</reference>
<reference key="2">
    <citation type="journal article" date="2004" name="Nat. Genet.">
        <title>Complete sequencing and characterization of 21,243 full-length human cDNAs.</title>
        <authorList>
            <person name="Ota T."/>
            <person name="Suzuki Y."/>
            <person name="Nishikawa T."/>
            <person name="Otsuki T."/>
            <person name="Sugiyama T."/>
            <person name="Irie R."/>
            <person name="Wakamatsu A."/>
            <person name="Hayashi K."/>
            <person name="Sato H."/>
            <person name="Nagai K."/>
            <person name="Kimura K."/>
            <person name="Makita H."/>
            <person name="Sekine M."/>
            <person name="Obayashi M."/>
            <person name="Nishi T."/>
            <person name="Shibahara T."/>
            <person name="Tanaka T."/>
            <person name="Ishii S."/>
            <person name="Yamamoto J."/>
            <person name="Saito K."/>
            <person name="Kawai Y."/>
            <person name="Isono Y."/>
            <person name="Nakamura Y."/>
            <person name="Nagahari K."/>
            <person name="Murakami K."/>
            <person name="Yasuda T."/>
            <person name="Iwayanagi T."/>
            <person name="Wagatsuma M."/>
            <person name="Shiratori A."/>
            <person name="Sudo H."/>
            <person name="Hosoiri T."/>
            <person name="Kaku Y."/>
            <person name="Kodaira H."/>
            <person name="Kondo H."/>
            <person name="Sugawara M."/>
            <person name="Takahashi M."/>
            <person name="Kanda K."/>
            <person name="Yokoi T."/>
            <person name="Furuya T."/>
            <person name="Kikkawa E."/>
            <person name="Omura Y."/>
            <person name="Abe K."/>
            <person name="Kamihara K."/>
            <person name="Katsuta N."/>
            <person name="Sato K."/>
            <person name="Tanikawa M."/>
            <person name="Yamazaki M."/>
            <person name="Ninomiya K."/>
            <person name="Ishibashi T."/>
            <person name="Yamashita H."/>
            <person name="Murakawa K."/>
            <person name="Fujimori K."/>
            <person name="Tanai H."/>
            <person name="Kimata M."/>
            <person name="Watanabe M."/>
            <person name="Hiraoka S."/>
            <person name="Chiba Y."/>
            <person name="Ishida S."/>
            <person name="Ono Y."/>
            <person name="Takiguchi S."/>
            <person name="Watanabe S."/>
            <person name="Yosida M."/>
            <person name="Hotuta T."/>
            <person name="Kusano J."/>
            <person name="Kanehori K."/>
            <person name="Takahashi-Fujii A."/>
            <person name="Hara H."/>
            <person name="Tanase T.-O."/>
            <person name="Nomura Y."/>
            <person name="Togiya S."/>
            <person name="Komai F."/>
            <person name="Hara R."/>
            <person name="Takeuchi K."/>
            <person name="Arita M."/>
            <person name="Imose N."/>
            <person name="Musashino K."/>
            <person name="Yuuki H."/>
            <person name="Oshima A."/>
            <person name="Sasaki N."/>
            <person name="Aotsuka S."/>
            <person name="Yoshikawa Y."/>
            <person name="Matsunawa H."/>
            <person name="Ichihara T."/>
            <person name="Shiohata N."/>
            <person name="Sano S."/>
            <person name="Moriya S."/>
            <person name="Momiyama H."/>
            <person name="Satoh N."/>
            <person name="Takami S."/>
            <person name="Terashima Y."/>
            <person name="Suzuki O."/>
            <person name="Nakagawa S."/>
            <person name="Senoh A."/>
            <person name="Mizoguchi H."/>
            <person name="Goto Y."/>
            <person name="Shimizu F."/>
            <person name="Wakebe H."/>
            <person name="Hishigaki H."/>
            <person name="Watanabe T."/>
            <person name="Sugiyama A."/>
            <person name="Takemoto M."/>
            <person name="Kawakami B."/>
            <person name="Yamazaki M."/>
            <person name="Watanabe K."/>
            <person name="Kumagai A."/>
            <person name="Itakura S."/>
            <person name="Fukuzumi Y."/>
            <person name="Fujimori Y."/>
            <person name="Komiyama M."/>
            <person name="Tashiro H."/>
            <person name="Tanigami A."/>
            <person name="Fujiwara T."/>
            <person name="Ono T."/>
            <person name="Yamada K."/>
            <person name="Fujii Y."/>
            <person name="Ozaki K."/>
            <person name="Hirao M."/>
            <person name="Ohmori Y."/>
            <person name="Kawabata A."/>
            <person name="Hikiji T."/>
            <person name="Kobatake N."/>
            <person name="Inagaki H."/>
            <person name="Ikema Y."/>
            <person name="Okamoto S."/>
            <person name="Okitani R."/>
            <person name="Kawakami T."/>
            <person name="Noguchi S."/>
            <person name="Itoh T."/>
            <person name="Shigeta K."/>
            <person name="Senba T."/>
            <person name="Matsumura K."/>
            <person name="Nakajima Y."/>
            <person name="Mizuno T."/>
            <person name="Morinaga M."/>
            <person name="Sasaki M."/>
            <person name="Togashi T."/>
            <person name="Oyama M."/>
            <person name="Hata H."/>
            <person name="Watanabe M."/>
            <person name="Komatsu T."/>
            <person name="Mizushima-Sugano J."/>
            <person name="Satoh T."/>
            <person name="Shirai Y."/>
            <person name="Takahashi Y."/>
            <person name="Nakagawa K."/>
            <person name="Okumura K."/>
            <person name="Nagase T."/>
            <person name="Nomura N."/>
            <person name="Kikuchi H."/>
            <person name="Masuho Y."/>
            <person name="Yamashita R."/>
            <person name="Nakai K."/>
            <person name="Yada T."/>
            <person name="Nakamura Y."/>
            <person name="Ohara O."/>
            <person name="Isogai T."/>
            <person name="Sugano S."/>
        </authorList>
    </citation>
    <scope>NUCLEOTIDE SEQUENCE [LARGE SCALE MRNA] (ISOFORM 3)</scope>
    <source>
        <tissue>Tongue</tissue>
    </source>
</reference>
<reference key="3">
    <citation type="journal article" date="2006" name="Nature">
        <title>DNA sequence of human chromosome 17 and analysis of rearrangement in the human lineage.</title>
        <authorList>
            <person name="Zody M.C."/>
            <person name="Garber M."/>
            <person name="Adams D.J."/>
            <person name="Sharpe T."/>
            <person name="Harrow J."/>
            <person name="Lupski J.R."/>
            <person name="Nicholson C."/>
            <person name="Searle S.M."/>
            <person name="Wilming L."/>
            <person name="Young S.K."/>
            <person name="Abouelleil A."/>
            <person name="Allen N.R."/>
            <person name="Bi W."/>
            <person name="Bloom T."/>
            <person name="Borowsky M.L."/>
            <person name="Bugalter B.E."/>
            <person name="Butler J."/>
            <person name="Chang J.L."/>
            <person name="Chen C.-K."/>
            <person name="Cook A."/>
            <person name="Corum B."/>
            <person name="Cuomo C.A."/>
            <person name="de Jong P.J."/>
            <person name="DeCaprio D."/>
            <person name="Dewar K."/>
            <person name="FitzGerald M."/>
            <person name="Gilbert J."/>
            <person name="Gibson R."/>
            <person name="Gnerre S."/>
            <person name="Goldstein S."/>
            <person name="Grafham D.V."/>
            <person name="Grocock R."/>
            <person name="Hafez N."/>
            <person name="Hagopian D.S."/>
            <person name="Hart E."/>
            <person name="Norman C.H."/>
            <person name="Humphray S."/>
            <person name="Jaffe D.B."/>
            <person name="Jones M."/>
            <person name="Kamal M."/>
            <person name="Khodiyar V.K."/>
            <person name="LaButti K."/>
            <person name="Laird G."/>
            <person name="Lehoczky J."/>
            <person name="Liu X."/>
            <person name="Lokyitsang T."/>
            <person name="Loveland J."/>
            <person name="Lui A."/>
            <person name="Macdonald P."/>
            <person name="Major J.E."/>
            <person name="Matthews L."/>
            <person name="Mauceli E."/>
            <person name="McCarroll S.A."/>
            <person name="Mihalev A.H."/>
            <person name="Mudge J."/>
            <person name="Nguyen C."/>
            <person name="Nicol R."/>
            <person name="O'Leary S.B."/>
            <person name="Osoegawa K."/>
            <person name="Schwartz D.C."/>
            <person name="Shaw-Smith C."/>
            <person name="Stankiewicz P."/>
            <person name="Steward C."/>
            <person name="Swarbreck D."/>
            <person name="Venkataraman V."/>
            <person name="Whittaker C.A."/>
            <person name="Yang X."/>
            <person name="Zimmer A.R."/>
            <person name="Bradley A."/>
            <person name="Hubbard T."/>
            <person name="Birren B.W."/>
            <person name="Rogers J."/>
            <person name="Lander E.S."/>
            <person name="Nusbaum C."/>
        </authorList>
    </citation>
    <scope>NUCLEOTIDE SEQUENCE [LARGE SCALE GENOMIC DNA]</scope>
</reference>
<reference key="4">
    <citation type="journal article" date="2004" name="Genome Res.">
        <title>The status, quality, and expansion of the NIH full-length cDNA project: the Mammalian Gene Collection (MGC).</title>
        <authorList>
            <consortium name="The MGC Project Team"/>
        </authorList>
    </citation>
    <scope>NUCLEOTIDE SEQUENCE [LARGE SCALE MRNA] (ISOFORM 2)</scope>
    <scope>NUCLEOTIDE SEQUENCE [LARGE SCALE MRNA] OF 1-459 (ISOFORM 1)</scope>
</reference>
<reference key="5">
    <citation type="submission" date="2006-09" db="PDB data bank">
        <title>Solution structure of the RA domain in the human link guanine nucleotide exchange factor II (Link-GEFII).</title>
        <authorList>
            <consortium name="RIKEN structural genomics initiative (RSGI)"/>
        </authorList>
    </citation>
    <scope>STRUCTURE BY NMR OF 314-420</scope>
</reference>